<organism>
    <name type="scientific">Lancefieldella rimae (strain ATCC 49626 / DSM 7090 / CCUG 31168 / NBRC 15546 / VPI D140H-11A)</name>
    <name type="common">Atopobium rimae</name>
    <dbReference type="NCBI Taxonomy" id="553184"/>
    <lineage>
        <taxon>Bacteria</taxon>
        <taxon>Bacillati</taxon>
        <taxon>Actinomycetota</taxon>
        <taxon>Coriobacteriia</taxon>
        <taxon>Coriobacteriales</taxon>
        <taxon>Atopobiaceae</taxon>
        <taxon>Lancefieldella</taxon>
    </lineage>
</organism>
<proteinExistence type="evidence at protein level"/>
<feature type="chain" id="PRO_0000459658" description="2-aminoethylphosphonate cytidylyltransferase">
    <location>
        <begin position="1"/>
        <end position="246"/>
    </location>
</feature>
<feature type="binding site" evidence="1">
    <location>
        <position position="19"/>
    </location>
    <ligand>
        <name>CMP-(2-aminoethyl)phosphonate</name>
        <dbReference type="ChEBI" id="CHEBI:147307"/>
    </ligand>
</feature>
<feature type="binding site" evidence="1">
    <location>
        <position position="20"/>
    </location>
    <ligand>
        <name>CMP-(2-aminoethyl)phosphonate</name>
        <dbReference type="ChEBI" id="CHEBI:147307"/>
    </ligand>
</feature>
<feature type="binding site" evidence="1">
    <location>
        <position position="34"/>
    </location>
    <ligand>
        <name>CMP-(2-aminoethyl)phosphonate</name>
        <dbReference type="ChEBI" id="CHEBI:147307"/>
    </ligand>
</feature>
<feature type="binding site" evidence="1">
    <location>
        <position position="97"/>
    </location>
    <ligand>
        <name>CMP-(2-aminoethyl)phosphonate</name>
        <dbReference type="ChEBI" id="CHEBI:147307"/>
    </ligand>
</feature>
<feature type="binding site" evidence="1">
    <location>
        <position position="114"/>
    </location>
    <ligand>
        <name>CMP-(2-aminoethyl)phosphonate</name>
        <dbReference type="ChEBI" id="CHEBI:147307"/>
    </ligand>
</feature>
<feature type="binding site" evidence="1">
    <location>
        <position position="115"/>
    </location>
    <ligand>
        <name>CMP-(2-aminoethyl)phosphonate</name>
        <dbReference type="ChEBI" id="CHEBI:147307"/>
    </ligand>
</feature>
<feature type="binding site" evidence="1">
    <location>
        <position position="116"/>
    </location>
    <ligand>
        <name>Mg(2+)</name>
        <dbReference type="ChEBI" id="CHEBI:18420"/>
        <label>1</label>
    </ligand>
</feature>
<feature type="binding site" evidence="1">
    <location>
        <position position="145"/>
    </location>
    <ligand>
        <name>CMP-(2-aminoethyl)phosphonate</name>
        <dbReference type="ChEBI" id="CHEBI:147307"/>
    </ligand>
</feature>
<feature type="binding site" evidence="1">
    <location>
        <position position="145"/>
    </location>
    <ligand>
        <name>Mg(2+)</name>
        <dbReference type="ChEBI" id="CHEBI:18420"/>
        <label>2</label>
    </ligand>
</feature>
<feature type="binding site" evidence="1">
    <location>
        <position position="161"/>
    </location>
    <ligand>
        <name>CMP-(2-aminoethyl)phosphonate</name>
        <dbReference type="ChEBI" id="CHEBI:147307"/>
    </ligand>
</feature>
<feature type="binding site" evidence="1">
    <location>
        <position position="202"/>
    </location>
    <ligand>
        <name>CMP-(2-aminoethyl)phosphonate</name>
        <dbReference type="ChEBI" id="CHEBI:147307"/>
    </ligand>
</feature>
<feature type="binding site" evidence="1">
    <location>
        <position position="226"/>
    </location>
    <ligand>
        <name>Mg(2+)</name>
        <dbReference type="ChEBI" id="CHEBI:18420"/>
        <label>1</label>
    </ligand>
</feature>
<feature type="binding site" evidence="1">
    <location>
        <position position="226"/>
    </location>
    <ligand>
        <name>Mg(2+)</name>
        <dbReference type="ChEBI" id="CHEBI:18420"/>
        <label>2</label>
    </ligand>
</feature>
<feature type="binding site" evidence="1">
    <location>
        <position position="228"/>
    </location>
    <ligand>
        <name>Mg(2+)</name>
        <dbReference type="ChEBI" id="CHEBI:18420"/>
        <label>1</label>
    </ligand>
</feature>
<feature type="binding site" evidence="1">
    <location>
        <position position="228"/>
    </location>
    <ligand>
        <name>Mg(2+)</name>
        <dbReference type="ChEBI" id="CHEBI:18420"/>
        <label>2</label>
    </ligand>
</feature>
<sequence>MACVKGSNAEKTNAIIMAAGLGTRMAPLTKTTPKPLISVNGTPMIETVINALVTAGVERISVVVGYLKEQFCYLEERYPAVVLVENTEYLEKNNISSIYAAVDVLEQGATFICEADLVISDEHIFQPRPSRSCYFGRKFSGHTGDWVFDLDDSGKIVRIGKGGSDTYAMVGLSYFSAPDAKRLARFMHDAYKETGHEQLFWDDVVNNHIAELDLSIHPVEAQQIAELDSVAELAAFDHGYVYLLRS</sequence>
<dbReference type="EC" id="2.7.7.107" evidence="2"/>
<dbReference type="EMBL" id="ACFE01000002">
    <property type="protein sequence ID" value="EEE17439.1"/>
    <property type="molecule type" value="Genomic_DNA"/>
</dbReference>
<dbReference type="RefSeq" id="WP_003149358.1">
    <property type="nucleotide sequence ID" value="NZ_ACFE01000002.1"/>
</dbReference>
<dbReference type="SMR" id="B9CM12"/>
<dbReference type="STRING" id="1383.IV60_GL000746"/>
<dbReference type="eggNOG" id="COG4750">
    <property type="taxonomic scope" value="Bacteria"/>
</dbReference>
<dbReference type="BioCyc" id="MetaCyc:MONOMER-21149"/>
<dbReference type="UniPathway" id="UPA00960"/>
<dbReference type="Proteomes" id="UP000004070">
    <property type="component" value="Unassembled WGS sequence"/>
</dbReference>
<dbReference type="GO" id="GO:0046872">
    <property type="term" value="F:metal ion binding"/>
    <property type="evidence" value="ECO:0007669"/>
    <property type="project" value="UniProtKB-KW"/>
</dbReference>
<dbReference type="GO" id="GO:0016779">
    <property type="term" value="F:nucleotidyltransferase activity"/>
    <property type="evidence" value="ECO:0007669"/>
    <property type="project" value="UniProtKB-KW"/>
</dbReference>
<dbReference type="GO" id="GO:0032923">
    <property type="term" value="P:organic phosphonate biosynthetic process"/>
    <property type="evidence" value="ECO:0007669"/>
    <property type="project" value="UniProtKB-UniPathway"/>
</dbReference>
<dbReference type="CDD" id="cd02523">
    <property type="entry name" value="PC_cytidylyltransferase"/>
    <property type="match status" value="1"/>
</dbReference>
<dbReference type="Gene3D" id="3.90.550.10">
    <property type="entry name" value="Spore Coat Polysaccharide Biosynthesis Protein SpsA, Chain A"/>
    <property type="match status" value="1"/>
</dbReference>
<dbReference type="InterPro" id="IPR050065">
    <property type="entry name" value="GlmU-like"/>
</dbReference>
<dbReference type="InterPro" id="IPR025877">
    <property type="entry name" value="MobA-like_NTP_Trfase"/>
</dbReference>
<dbReference type="InterPro" id="IPR029044">
    <property type="entry name" value="Nucleotide-diphossugar_trans"/>
</dbReference>
<dbReference type="PANTHER" id="PTHR43584">
    <property type="entry name" value="NUCLEOTIDYL TRANSFERASE"/>
    <property type="match status" value="1"/>
</dbReference>
<dbReference type="PANTHER" id="PTHR43584:SF5">
    <property type="entry name" value="PROTEIN LICC"/>
    <property type="match status" value="1"/>
</dbReference>
<dbReference type="Pfam" id="PF12804">
    <property type="entry name" value="NTP_transf_3"/>
    <property type="match status" value="1"/>
</dbReference>
<dbReference type="SUPFAM" id="SSF53448">
    <property type="entry name" value="Nucleotide-diphospho-sugar transferases"/>
    <property type="match status" value="1"/>
</dbReference>
<accession>B9CM12</accession>
<name>PNTC_LANR4</name>
<protein>
    <recommendedName>
        <fullName evidence="4">2-aminoethylphosphonate cytidylyltransferase</fullName>
        <shortName evidence="3">AEP cytidylyltransferase</shortName>
        <ecNumber evidence="2">2.7.7.107</ecNumber>
    </recommendedName>
    <alternativeName>
        <fullName evidence="3">Ari-PntC</fullName>
    </alternativeName>
    <alternativeName>
        <fullName evidence="3">Phosphonate-specific cytidylyltransferase</fullName>
    </alternativeName>
    <alternativeName>
        <fullName evidence="3">Phosphonyl tailoring cytidylyltransferase</fullName>
    </alternativeName>
</protein>
<comment type="function">
    <text evidence="2">Cytidylyltransferase involved in the biosynthesis of cell-surface phosphonates (PubMed:31420548). Catalyzes the activation of 2-aminoethylphosphonate (AEP) to CMP-2-aminoethylphosphonate (CMP-AEP) (PubMed:31420548). Can also use phosphocholine, with much lower efficiency (PubMed:31420548). Exhibits strong activity towards CTP, limited activity towards ATP and no activity with GTP (PubMed:31420548).</text>
</comment>
<comment type="catalytic activity">
    <reaction evidence="2">
        <text>(2-aminoethyl)phosphonate + CTP = CMP-(2-aminoethyl)phosphonate + diphosphate</text>
        <dbReference type="Rhea" id="RHEA:63448"/>
        <dbReference type="ChEBI" id="CHEBI:33019"/>
        <dbReference type="ChEBI" id="CHEBI:37563"/>
        <dbReference type="ChEBI" id="CHEBI:57418"/>
        <dbReference type="ChEBI" id="CHEBI:147307"/>
        <dbReference type="EC" id="2.7.7.107"/>
    </reaction>
    <physiologicalReaction direction="left-to-right" evidence="2">
        <dbReference type="Rhea" id="RHEA:63449"/>
    </physiologicalReaction>
</comment>
<comment type="cofactor">
    <cofactor evidence="5">
        <name>Mg(2+)</name>
        <dbReference type="ChEBI" id="CHEBI:18420"/>
    </cofactor>
</comment>
<comment type="biophysicochemical properties">
    <kinetics>
        <KM evidence="2">0.012 mM for 2-aminoethylphosphonate</KM>
        <KM evidence="2">1 mM for phosphocholine</KM>
        <text evidence="2">kcat is 3.7 sec(-1) with 2-aminoethylphosphonate as substrate. kcat is 0.7 sec(-1) with phosphocholine as substrate.</text>
    </kinetics>
</comment>
<comment type="pathway">
    <text evidence="5">Phosphorus metabolism; phosphonate biosynthesis.</text>
</comment>
<comment type="subunit">
    <text evidence="2">Monomer.</text>
</comment>
<comment type="similarity">
    <text evidence="4">Belongs to the LicC/PntC cytidylyltransferase family.</text>
</comment>
<gene>
    <name evidence="3" type="primary">pntC</name>
    <name evidence="6" type="ORF">ATORI0001_1348</name>
</gene>
<reference key="1">
    <citation type="submission" date="2009-01" db="EMBL/GenBank/DDBJ databases">
        <authorList>
            <person name="Madupu R."/>
            <person name="Sebastian Y."/>
            <person name="Durkin A.S."/>
            <person name="Torralba M."/>
            <person name="Methe B."/>
            <person name="Sutton G.G."/>
            <person name="Strausberg R.L."/>
            <person name="Nelson K.E."/>
        </authorList>
    </citation>
    <scope>NUCLEOTIDE SEQUENCE [LARGE SCALE GENOMIC DNA]</scope>
    <source>
        <strain>ATCC 49626 / DSM 7090 / CCUG 31168 / JCM 10299 / NBRC 15546 / VPI D140H-11A</strain>
    </source>
</reference>
<reference key="2">
    <citation type="journal article" date="2019" name="Nat. Commun.">
        <title>The predominance of nucleotidyl activation in bacterial phosphonate biosynthesis.</title>
        <authorList>
            <person name="Rice K."/>
            <person name="Batul K."/>
            <person name="Whiteside J."/>
            <person name="Kelso J."/>
            <person name="Papinski M."/>
            <person name="Schmidt E."/>
            <person name="Pratasouskaya A."/>
            <person name="Wang D."/>
            <person name="Sullivan R."/>
            <person name="Bartlett C."/>
            <person name="Weadge J.T."/>
            <person name="Van der Kamp M.W."/>
            <person name="Moreno-Hagelsieb G."/>
            <person name="Suits M.D."/>
            <person name="Horsman G.P."/>
        </authorList>
    </citation>
    <scope>FUNCTION</scope>
    <scope>CATALYTIC ACTIVITY</scope>
    <scope>BIOPHYSICOCHEMICAL PROPERTIES</scope>
    <scope>SUBUNIT</scope>
    <source>
        <strain>ATCC 49626 / DSM 7090 / CCUG 31168 / JCM 10299 / NBRC 15546 / VPI D140H-11A</strain>
    </source>
</reference>
<keyword id="KW-0460">Magnesium</keyword>
<keyword id="KW-0479">Metal-binding</keyword>
<keyword id="KW-0548">Nucleotidyltransferase</keyword>
<keyword id="KW-0808">Transferase</keyword>
<evidence type="ECO:0000250" key="1">
    <source>
        <dbReference type="UniProtKB" id="Q73MU2"/>
    </source>
</evidence>
<evidence type="ECO:0000269" key="2">
    <source>
    </source>
</evidence>
<evidence type="ECO:0000303" key="3">
    <source>
    </source>
</evidence>
<evidence type="ECO:0000305" key="4"/>
<evidence type="ECO:0000305" key="5">
    <source>
    </source>
</evidence>
<evidence type="ECO:0000312" key="6">
    <source>
        <dbReference type="EMBL" id="EEE17439.1"/>
    </source>
</evidence>